<dbReference type="GO" id="GO:0005576">
    <property type="term" value="C:extracellular region"/>
    <property type="evidence" value="ECO:0007005"/>
    <property type="project" value="UniProtKB"/>
</dbReference>
<dbReference type="GO" id="GO:0090729">
    <property type="term" value="F:toxin activity"/>
    <property type="evidence" value="ECO:0007669"/>
    <property type="project" value="UniProtKB-KW"/>
</dbReference>
<comment type="subcellular location">
    <subcellularLocation>
        <location evidence="1">Secreted</location>
    </subcellularLocation>
</comment>
<comment type="tissue specificity">
    <text evidence="1">Expressed by the venom gland.</text>
</comment>
<comment type="mass spectrometry" mass="25402.0" method="Electrospray" evidence="1"/>
<protein>
    <recommendedName>
        <fullName>Toxin To83</fullName>
    </recommendedName>
    <alternativeName>
        <fullName>Toxin Tc83</fullName>
    </alternativeName>
</protein>
<organism>
    <name type="scientific">Tityus obscurus</name>
    <name type="common">Amazonian scorpion</name>
    <name type="synonym">Tityus cambridgei</name>
    <dbReference type="NCBI Taxonomy" id="1221240"/>
    <lineage>
        <taxon>Eukaryota</taxon>
        <taxon>Metazoa</taxon>
        <taxon>Ecdysozoa</taxon>
        <taxon>Arthropoda</taxon>
        <taxon>Chelicerata</taxon>
        <taxon>Arachnida</taxon>
        <taxon>Scorpiones</taxon>
        <taxon>Buthida</taxon>
        <taxon>Buthoidea</taxon>
        <taxon>Buthidae</taxon>
        <taxon>Tityus</taxon>
    </lineage>
</organism>
<name>SC83_TITOB</name>
<keyword id="KW-0903">Direct protein sequencing</keyword>
<keyword id="KW-0964">Secreted</keyword>
<keyword id="KW-0800">Toxin</keyword>
<sequence length="10" mass="1159">NDQCLVIEIL</sequence>
<feature type="chain" id="PRO_0000066819" description="Toxin To83">
    <location>
        <begin position="1"/>
        <end position="10" status="greater than"/>
    </location>
</feature>
<feature type="non-terminal residue" evidence="2">
    <location>
        <position position="10"/>
    </location>
</feature>
<accession>P84694</accession>
<proteinExistence type="evidence at protein level"/>
<reference evidence="3" key="1">
    <citation type="journal article" date="2004" name="J. Chromatogr. B">
        <title>Proteomics of the venom from the Amazonian scorpion Tityus cambridgei and the role of prolines on mass spectrometry analysis of toxins.</title>
        <authorList>
            <person name="Batista C.V.F."/>
            <person name="del Pozo L."/>
            <person name="Zamudio F.Z."/>
            <person name="Contreras S."/>
            <person name="Becerril B."/>
            <person name="Wanke E."/>
            <person name="Possani L.D."/>
        </authorList>
    </citation>
    <scope>PROTEIN SEQUENCE</scope>
    <scope>SUBCELLULAR LOCATION</scope>
    <scope>TISSUE SPECIFICITY</scope>
    <scope>MASS SPECTROMETRY</scope>
    <source>
        <tissue evidence="1">Venom</tissue>
    </source>
</reference>
<evidence type="ECO:0000269" key="1">
    <source>
    </source>
</evidence>
<evidence type="ECO:0000303" key="2">
    <source>
    </source>
</evidence>
<evidence type="ECO:0000305" key="3"/>